<keyword id="KW-0067">ATP-binding</keyword>
<keyword id="KW-0963">Cytoplasm</keyword>
<keyword id="KW-0418">Kinase</keyword>
<keyword id="KW-0547">Nucleotide-binding</keyword>
<keyword id="KW-0808">Transferase</keyword>
<feature type="chain" id="PRO_1000048186" description="Cytidylate kinase">
    <location>
        <begin position="1"/>
        <end position="229"/>
    </location>
</feature>
<feature type="binding site" evidence="1">
    <location>
        <begin position="10"/>
        <end position="18"/>
    </location>
    <ligand>
        <name>ATP</name>
        <dbReference type="ChEBI" id="CHEBI:30616"/>
    </ligand>
</feature>
<reference key="1">
    <citation type="journal article" date="2007" name="PLoS Biol.">
        <title>Evolution of symbiotic bacteria in the distal human intestine.</title>
        <authorList>
            <person name="Xu J."/>
            <person name="Mahowald M.A."/>
            <person name="Ley R.E."/>
            <person name="Lozupone C.A."/>
            <person name="Hamady M."/>
            <person name="Martens E.C."/>
            <person name="Henrissat B."/>
            <person name="Coutinho P.M."/>
            <person name="Minx P."/>
            <person name="Latreille P."/>
            <person name="Cordum H."/>
            <person name="Van Brunt A."/>
            <person name="Kim K."/>
            <person name="Fulton R.S."/>
            <person name="Fulton L.A."/>
            <person name="Clifton S.W."/>
            <person name="Wilson R.K."/>
            <person name="Knight R.D."/>
            <person name="Gordon J.I."/>
        </authorList>
    </citation>
    <scope>NUCLEOTIDE SEQUENCE [LARGE SCALE GENOMIC DNA]</scope>
    <source>
        <strain>ATCC 8482 / DSM 1447 / JCM 5826 / CCUG 4940 / NBRC 14291 / NCTC 11154</strain>
    </source>
</reference>
<protein>
    <recommendedName>
        <fullName evidence="1">Cytidylate kinase</fullName>
        <shortName evidence="1">CK</shortName>
        <ecNumber evidence="1">2.7.4.25</ecNumber>
    </recommendedName>
    <alternativeName>
        <fullName evidence="1">Cytidine monophosphate kinase</fullName>
        <shortName evidence="1">CMP kinase</shortName>
    </alternativeName>
</protein>
<accession>A6L1P6</accession>
<sequence length="229" mass="25717">MKKITIAIDGYSSCGKSTMAKDLAREIGYIYIDSGAMYRAVTLYSLQKGFFTERGIDTEALKTAMPDIHISFRLNPETQRPMTFLNDTNVEDAIRSMEVSSHVSPIAALGFVREALVKQQQEMGKAKGIVMDGRDIGTVVFPDAELKIFVTASAAIRAQRRYDELRSKGQEASYEKILENVEERDRIDQTREVSPLRQADDAILLDNSHMSIAEQKKWLTEKFQAAING</sequence>
<comment type="catalytic activity">
    <reaction evidence="1">
        <text>CMP + ATP = CDP + ADP</text>
        <dbReference type="Rhea" id="RHEA:11600"/>
        <dbReference type="ChEBI" id="CHEBI:30616"/>
        <dbReference type="ChEBI" id="CHEBI:58069"/>
        <dbReference type="ChEBI" id="CHEBI:60377"/>
        <dbReference type="ChEBI" id="CHEBI:456216"/>
        <dbReference type="EC" id="2.7.4.25"/>
    </reaction>
</comment>
<comment type="catalytic activity">
    <reaction evidence="1">
        <text>dCMP + ATP = dCDP + ADP</text>
        <dbReference type="Rhea" id="RHEA:25094"/>
        <dbReference type="ChEBI" id="CHEBI:30616"/>
        <dbReference type="ChEBI" id="CHEBI:57566"/>
        <dbReference type="ChEBI" id="CHEBI:58593"/>
        <dbReference type="ChEBI" id="CHEBI:456216"/>
        <dbReference type="EC" id="2.7.4.25"/>
    </reaction>
</comment>
<comment type="subcellular location">
    <subcellularLocation>
        <location evidence="1">Cytoplasm</location>
    </subcellularLocation>
</comment>
<comment type="similarity">
    <text evidence="1">Belongs to the cytidylate kinase family. Type 1 subfamily.</text>
</comment>
<name>KCY_PHOV8</name>
<dbReference type="EC" id="2.7.4.25" evidence="1"/>
<dbReference type="EMBL" id="CP000139">
    <property type="protein sequence ID" value="ABR39610.1"/>
    <property type="molecule type" value="Genomic_DNA"/>
</dbReference>
<dbReference type="RefSeq" id="WP_005845849.1">
    <property type="nucleotide sequence ID" value="NZ_JANSWM010000118.1"/>
</dbReference>
<dbReference type="SMR" id="A6L1P6"/>
<dbReference type="STRING" id="435590.BVU_1937"/>
<dbReference type="PaxDb" id="435590-BVU_1937"/>
<dbReference type="GeneID" id="5302903"/>
<dbReference type="KEGG" id="bvu:BVU_1937"/>
<dbReference type="eggNOG" id="COG0283">
    <property type="taxonomic scope" value="Bacteria"/>
</dbReference>
<dbReference type="HOGENOM" id="CLU_079959_0_2_10"/>
<dbReference type="BioCyc" id="BVUL435590:G1G59-2028-MONOMER"/>
<dbReference type="Proteomes" id="UP000002861">
    <property type="component" value="Chromosome"/>
</dbReference>
<dbReference type="GO" id="GO:0005829">
    <property type="term" value="C:cytosol"/>
    <property type="evidence" value="ECO:0007669"/>
    <property type="project" value="TreeGrafter"/>
</dbReference>
<dbReference type="GO" id="GO:0005524">
    <property type="term" value="F:ATP binding"/>
    <property type="evidence" value="ECO:0007669"/>
    <property type="project" value="UniProtKB-UniRule"/>
</dbReference>
<dbReference type="GO" id="GO:0036430">
    <property type="term" value="F:CMP kinase activity"/>
    <property type="evidence" value="ECO:0007669"/>
    <property type="project" value="RHEA"/>
</dbReference>
<dbReference type="GO" id="GO:0036431">
    <property type="term" value="F:dCMP kinase activity"/>
    <property type="evidence" value="ECO:0007669"/>
    <property type="project" value="RHEA"/>
</dbReference>
<dbReference type="GO" id="GO:0015949">
    <property type="term" value="P:nucleobase-containing small molecule interconversion"/>
    <property type="evidence" value="ECO:0007669"/>
    <property type="project" value="TreeGrafter"/>
</dbReference>
<dbReference type="GO" id="GO:0006220">
    <property type="term" value="P:pyrimidine nucleotide metabolic process"/>
    <property type="evidence" value="ECO:0007669"/>
    <property type="project" value="UniProtKB-UniRule"/>
</dbReference>
<dbReference type="CDD" id="cd02020">
    <property type="entry name" value="CMPK"/>
    <property type="match status" value="1"/>
</dbReference>
<dbReference type="Gene3D" id="3.40.50.300">
    <property type="entry name" value="P-loop containing nucleotide triphosphate hydrolases"/>
    <property type="match status" value="1"/>
</dbReference>
<dbReference type="HAMAP" id="MF_00238">
    <property type="entry name" value="Cytidyl_kinase_type1"/>
    <property type="match status" value="1"/>
</dbReference>
<dbReference type="InterPro" id="IPR003136">
    <property type="entry name" value="Cytidylate_kin"/>
</dbReference>
<dbReference type="InterPro" id="IPR011994">
    <property type="entry name" value="Cytidylate_kinase_dom"/>
</dbReference>
<dbReference type="InterPro" id="IPR027417">
    <property type="entry name" value="P-loop_NTPase"/>
</dbReference>
<dbReference type="NCBIfam" id="TIGR00017">
    <property type="entry name" value="cmk"/>
    <property type="match status" value="1"/>
</dbReference>
<dbReference type="PANTHER" id="PTHR21299:SF2">
    <property type="entry name" value="CYTIDYLATE KINASE"/>
    <property type="match status" value="1"/>
</dbReference>
<dbReference type="PANTHER" id="PTHR21299">
    <property type="entry name" value="CYTIDYLATE KINASE/PANTOATE-BETA-ALANINE LIGASE"/>
    <property type="match status" value="1"/>
</dbReference>
<dbReference type="Pfam" id="PF02224">
    <property type="entry name" value="Cytidylate_kin"/>
    <property type="match status" value="1"/>
</dbReference>
<dbReference type="SUPFAM" id="SSF52540">
    <property type="entry name" value="P-loop containing nucleoside triphosphate hydrolases"/>
    <property type="match status" value="1"/>
</dbReference>
<gene>
    <name evidence="1" type="primary">cmk</name>
    <name type="ordered locus">BVU_1937</name>
</gene>
<evidence type="ECO:0000255" key="1">
    <source>
        <dbReference type="HAMAP-Rule" id="MF_00238"/>
    </source>
</evidence>
<proteinExistence type="inferred from homology"/>
<organism>
    <name type="scientific">Phocaeicola vulgatus (strain ATCC 8482 / DSM 1447 / JCM 5826 / CCUG 4940 / NBRC 14291 / NCTC 11154)</name>
    <name type="common">Bacteroides vulgatus</name>
    <dbReference type="NCBI Taxonomy" id="435590"/>
    <lineage>
        <taxon>Bacteria</taxon>
        <taxon>Pseudomonadati</taxon>
        <taxon>Bacteroidota</taxon>
        <taxon>Bacteroidia</taxon>
        <taxon>Bacteroidales</taxon>
        <taxon>Bacteroidaceae</taxon>
        <taxon>Phocaeicola</taxon>
    </lineage>
</organism>